<sequence>MKKIAIFGSTGSIGSSLLKIIKDDQKNFKIELLTVNKNYKKLIKQVKLFNVKNVIVTDYNSFLITTKLLKNAKVKVFNNFDSLNKIFNTNNKIDYSMCAISGFDGLKPTLDIIKFTKTIAIANKESIICGWNLIKKDLKKYKTYFVPVDSEHFSIWSLLDNNKKNNFEKIYITASGGPFRNLSLKKFRNISVKDALKHPNWSMGKKITIDSATMMNKVFEIIEAKKIFNLNYKQLEILIHPKSYLHAIVKFNNGLSKLLVHDTNMTIPIFNSIYFNTDKKLKSKNIDIKTLNNLNLKKIDNIRFPVIKILNNLSNEDSLFETIIVSANDKLVKLFLNNKIKFNDISNTLIKICNTPEFNKFKSMKPRNIDEIQNLNDYVSLKISSMSV</sequence>
<comment type="function">
    <text evidence="1">Catalyzes the NADPH-dependent rearrangement and reduction of 1-deoxy-D-xylulose-5-phosphate (DXP) to 2-C-methyl-D-erythritol 4-phosphate (MEP).</text>
</comment>
<comment type="catalytic activity">
    <reaction evidence="1">
        <text>2-C-methyl-D-erythritol 4-phosphate + NADP(+) = 1-deoxy-D-xylulose 5-phosphate + NADPH + H(+)</text>
        <dbReference type="Rhea" id="RHEA:13717"/>
        <dbReference type="ChEBI" id="CHEBI:15378"/>
        <dbReference type="ChEBI" id="CHEBI:57783"/>
        <dbReference type="ChEBI" id="CHEBI:57792"/>
        <dbReference type="ChEBI" id="CHEBI:58262"/>
        <dbReference type="ChEBI" id="CHEBI:58349"/>
        <dbReference type="EC" id="1.1.1.267"/>
    </reaction>
    <physiologicalReaction direction="right-to-left" evidence="1">
        <dbReference type="Rhea" id="RHEA:13719"/>
    </physiologicalReaction>
</comment>
<comment type="cofactor">
    <cofactor evidence="1">
        <name>Mg(2+)</name>
        <dbReference type="ChEBI" id="CHEBI:18420"/>
    </cofactor>
    <cofactor evidence="1">
        <name>Mn(2+)</name>
        <dbReference type="ChEBI" id="CHEBI:29035"/>
    </cofactor>
</comment>
<comment type="pathway">
    <text evidence="1">Isoprenoid biosynthesis; isopentenyl diphosphate biosynthesis via DXP pathway; isopentenyl diphosphate from 1-deoxy-D-xylulose 5-phosphate: step 1/6.</text>
</comment>
<comment type="similarity">
    <text evidence="1">Belongs to the DXR family.</text>
</comment>
<organism>
    <name type="scientific">Pelagibacter ubique (strain HTCC1062)</name>
    <dbReference type="NCBI Taxonomy" id="335992"/>
    <lineage>
        <taxon>Bacteria</taxon>
        <taxon>Pseudomonadati</taxon>
        <taxon>Pseudomonadota</taxon>
        <taxon>Alphaproteobacteria</taxon>
        <taxon>Candidatus Pelagibacterales</taxon>
        <taxon>Candidatus Pelagibacteraceae</taxon>
        <taxon>Candidatus Pelagibacter</taxon>
    </lineage>
</organism>
<proteinExistence type="inferred from homology"/>
<feature type="chain" id="PRO_0000163688" description="1-deoxy-D-xylulose 5-phosphate reductoisomerase">
    <location>
        <begin position="1"/>
        <end position="388"/>
    </location>
</feature>
<feature type="binding site" evidence="1">
    <location>
        <position position="10"/>
    </location>
    <ligand>
        <name>NADPH</name>
        <dbReference type="ChEBI" id="CHEBI:57783"/>
    </ligand>
</feature>
<feature type="binding site" evidence="1">
    <location>
        <position position="11"/>
    </location>
    <ligand>
        <name>NADPH</name>
        <dbReference type="ChEBI" id="CHEBI:57783"/>
    </ligand>
</feature>
<feature type="binding site" evidence="1">
    <location>
        <position position="12"/>
    </location>
    <ligand>
        <name>NADPH</name>
        <dbReference type="ChEBI" id="CHEBI:57783"/>
    </ligand>
</feature>
<feature type="binding site" evidence="1">
    <location>
        <position position="13"/>
    </location>
    <ligand>
        <name>NADPH</name>
        <dbReference type="ChEBI" id="CHEBI:57783"/>
    </ligand>
</feature>
<feature type="binding site" evidence="1">
    <location>
        <position position="37"/>
    </location>
    <ligand>
        <name>NADPH</name>
        <dbReference type="ChEBI" id="CHEBI:57783"/>
    </ligand>
</feature>
<feature type="binding site" evidence="1">
    <location>
        <position position="38"/>
    </location>
    <ligand>
        <name>NADPH</name>
        <dbReference type="ChEBI" id="CHEBI:57783"/>
    </ligand>
</feature>
<feature type="binding site" evidence="1">
    <location>
        <position position="123"/>
    </location>
    <ligand>
        <name>NADPH</name>
        <dbReference type="ChEBI" id="CHEBI:57783"/>
    </ligand>
</feature>
<feature type="binding site" evidence="1">
    <location>
        <position position="124"/>
    </location>
    <ligand>
        <name>1-deoxy-D-xylulose 5-phosphate</name>
        <dbReference type="ChEBI" id="CHEBI:57792"/>
    </ligand>
</feature>
<feature type="binding site" evidence="1">
    <location>
        <position position="125"/>
    </location>
    <ligand>
        <name>NADPH</name>
        <dbReference type="ChEBI" id="CHEBI:57783"/>
    </ligand>
</feature>
<feature type="binding site" evidence="1">
    <location>
        <position position="149"/>
    </location>
    <ligand>
        <name>Mn(2+)</name>
        <dbReference type="ChEBI" id="CHEBI:29035"/>
    </ligand>
</feature>
<feature type="binding site" evidence="1">
    <location>
        <position position="150"/>
    </location>
    <ligand>
        <name>1-deoxy-D-xylulose 5-phosphate</name>
        <dbReference type="ChEBI" id="CHEBI:57792"/>
    </ligand>
</feature>
<feature type="binding site" evidence="1">
    <location>
        <position position="151"/>
    </location>
    <ligand>
        <name>1-deoxy-D-xylulose 5-phosphate</name>
        <dbReference type="ChEBI" id="CHEBI:57792"/>
    </ligand>
</feature>
<feature type="binding site" evidence="1">
    <location>
        <position position="151"/>
    </location>
    <ligand>
        <name>Mn(2+)</name>
        <dbReference type="ChEBI" id="CHEBI:29035"/>
    </ligand>
</feature>
<feature type="binding site" evidence="1">
    <location>
        <position position="175"/>
    </location>
    <ligand>
        <name>1-deoxy-D-xylulose 5-phosphate</name>
        <dbReference type="ChEBI" id="CHEBI:57792"/>
    </ligand>
</feature>
<feature type="binding site" evidence="1">
    <location>
        <position position="198"/>
    </location>
    <ligand>
        <name>1-deoxy-D-xylulose 5-phosphate</name>
        <dbReference type="ChEBI" id="CHEBI:57792"/>
    </ligand>
</feature>
<feature type="binding site" evidence="1">
    <location>
        <position position="204"/>
    </location>
    <ligand>
        <name>NADPH</name>
        <dbReference type="ChEBI" id="CHEBI:57783"/>
    </ligand>
</feature>
<feature type="binding site" evidence="1">
    <location>
        <position position="211"/>
    </location>
    <ligand>
        <name>1-deoxy-D-xylulose 5-phosphate</name>
        <dbReference type="ChEBI" id="CHEBI:57792"/>
    </ligand>
</feature>
<feature type="binding site" evidence="1">
    <location>
        <position position="216"/>
    </location>
    <ligand>
        <name>1-deoxy-D-xylulose 5-phosphate</name>
        <dbReference type="ChEBI" id="CHEBI:57792"/>
    </ligand>
</feature>
<feature type="binding site" evidence="1">
    <location>
        <position position="217"/>
    </location>
    <ligand>
        <name>1-deoxy-D-xylulose 5-phosphate</name>
        <dbReference type="ChEBI" id="CHEBI:57792"/>
    </ligand>
</feature>
<feature type="binding site" evidence="1">
    <location>
        <position position="220"/>
    </location>
    <ligand>
        <name>1-deoxy-D-xylulose 5-phosphate</name>
        <dbReference type="ChEBI" id="CHEBI:57792"/>
    </ligand>
</feature>
<feature type="binding site" evidence="1">
    <location>
        <position position="220"/>
    </location>
    <ligand>
        <name>Mn(2+)</name>
        <dbReference type="ChEBI" id="CHEBI:29035"/>
    </ligand>
</feature>
<dbReference type="EC" id="1.1.1.267" evidence="1"/>
<dbReference type="EMBL" id="CP000084">
    <property type="protein sequence ID" value="AAZ21725.1"/>
    <property type="molecule type" value="Genomic_DNA"/>
</dbReference>
<dbReference type="RefSeq" id="WP_011282031.1">
    <property type="nucleotide sequence ID" value="NC_007205.1"/>
</dbReference>
<dbReference type="SMR" id="Q4FM64"/>
<dbReference type="STRING" id="335992.SAR11_0912"/>
<dbReference type="GeneID" id="66295405"/>
<dbReference type="KEGG" id="pub:SAR11_0912"/>
<dbReference type="eggNOG" id="COG0743">
    <property type="taxonomic scope" value="Bacteria"/>
</dbReference>
<dbReference type="HOGENOM" id="CLU_035714_4_0_5"/>
<dbReference type="OrthoDB" id="9806546at2"/>
<dbReference type="UniPathway" id="UPA00056">
    <property type="reaction ID" value="UER00092"/>
</dbReference>
<dbReference type="Proteomes" id="UP000002528">
    <property type="component" value="Chromosome"/>
</dbReference>
<dbReference type="GO" id="GO:0030604">
    <property type="term" value="F:1-deoxy-D-xylulose-5-phosphate reductoisomerase activity"/>
    <property type="evidence" value="ECO:0007669"/>
    <property type="project" value="UniProtKB-UniRule"/>
</dbReference>
<dbReference type="GO" id="GO:0030145">
    <property type="term" value="F:manganese ion binding"/>
    <property type="evidence" value="ECO:0007669"/>
    <property type="project" value="TreeGrafter"/>
</dbReference>
<dbReference type="GO" id="GO:0070402">
    <property type="term" value="F:NADPH binding"/>
    <property type="evidence" value="ECO:0007669"/>
    <property type="project" value="InterPro"/>
</dbReference>
<dbReference type="GO" id="GO:0051484">
    <property type="term" value="P:isopentenyl diphosphate biosynthetic process, methylerythritol 4-phosphate pathway involved in terpenoid biosynthetic process"/>
    <property type="evidence" value="ECO:0007669"/>
    <property type="project" value="TreeGrafter"/>
</dbReference>
<dbReference type="Gene3D" id="1.10.1740.10">
    <property type="match status" value="1"/>
</dbReference>
<dbReference type="Gene3D" id="3.40.50.720">
    <property type="entry name" value="NAD(P)-binding Rossmann-like Domain"/>
    <property type="match status" value="1"/>
</dbReference>
<dbReference type="HAMAP" id="MF_00183">
    <property type="entry name" value="DXP_reductoisom"/>
    <property type="match status" value="1"/>
</dbReference>
<dbReference type="InterPro" id="IPR003821">
    <property type="entry name" value="DXP_reductoisomerase"/>
</dbReference>
<dbReference type="InterPro" id="IPR013644">
    <property type="entry name" value="DXP_reductoisomerase_C"/>
</dbReference>
<dbReference type="InterPro" id="IPR013512">
    <property type="entry name" value="DXP_reductoisomerase_N"/>
</dbReference>
<dbReference type="InterPro" id="IPR026877">
    <property type="entry name" value="DXPR_C"/>
</dbReference>
<dbReference type="InterPro" id="IPR036169">
    <property type="entry name" value="DXPR_C_sf"/>
</dbReference>
<dbReference type="InterPro" id="IPR036291">
    <property type="entry name" value="NAD(P)-bd_dom_sf"/>
</dbReference>
<dbReference type="PANTHER" id="PTHR30525">
    <property type="entry name" value="1-DEOXY-D-XYLULOSE 5-PHOSPHATE REDUCTOISOMERASE"/>
    <property type="match status" value="1"/>
</dbReference>
<dbReference type="PANTHER" id="PTHR30525:SF0">
    <property type="entry name" value="1-DEOXY-D-XYLULOSE 5-PHOSPHATE REDUCTOISOMERASE, CHLOROPLASTIC"/>
    <property type="match status" value="1"/>
</dbReference>
<dbReference type="Pfam" id="PF08436">
    <property type="entry name" value="DXP_redisom_C"/>
    <property type="match status" value="1"/>
</dbReference>
<dbReference type="Pfam" id="PF02670">
    <property type="entry name" value="DXP_reductoisom"/>
    <property type="match status" value="1"/>
</dbReference>
<dbReference type="Pfam" id="PF13288">
    <property type="entry name" value="DXPR_C"/>
    <property type="match status" value="1"/>
</dbReference>
<dbReference type="PIRSF" id="PIRSF006205">
    <property type="entry name" value="Dxp_reductismrs"/>
    <property type="match status" value="1"/>
</dbReference>
<dbReference type="SUPFAM" id="SSF69055">
    <property type="entry name" value="1-deoxy-D-xylulose-5-phosphate reductoisomerase, C-terminal domain"/>
    <property type="match status" value="1"/>
</dbReference>
<dbReference type="SUPFAM" id="SSF55347">
    <property type="entry name" value="Glyceraldehyde-3-phosphate dehydrogenase-like, C-terminal domain"/>
    <property type="match status" value="1"/>
</dbReference>
<dbReference type="SUPFAM" id="SSF51735">
    <property type="entry name" value="NAD(P)-binding Rossmann-fold domains"/>
    <property type="match status" value="1"/>
</dbReference>
<evidence type="ECO:0000255" key="1">
    <source>
        <dbReference type="HAMAP-Rule" id="MF_00183"/>
    </source>
</evidence>
<gene>
    <name evidence="1" type="primary">dxr</name>
    <name type="ordered locus">SAR11_0912</name>
</gene>
<keyword id="KW-0414">Isoprene biosynthesis</keyword>
<keyword id="KW-0464">Manganese</keyword>
<keyword id="KW-0479">Metal-binding</keyword>
<keyword id="KW-0521">NADP</keyword>
<keyword id="KW-0560">Oxidoreductase</keyword>
<keyword id="KW-1185">Reference proteome</keyword>
<accession>Q4FM64</accession>
<reference key="1">
    <citation type="journal article" date="2005" name="Science">
        <title>Genome streamlining in a cosmopolitan oceanic bacterium.</title>
        <authorList>
            <person name="Giovannoni S.J."/>
            <person name="Tripp H.J."/>
            <person name="Givan S."/>
            <person name="Podar M."/>
            <person name="Vergin K.L."/>
            <person name="Baptista D."/>
            <person name="Bibbs L."/>
            <person name="Eads J."/>
            <person name="Richardson T.H."/>
            <person name="Noordewier M."/>
            <person name="Rappe M.S."/>
            <person name="Short J.M."/>
            <person name="Carrington J.C."/>
            <person name="Mathur E.J."/>
        </authorList>
    </citation>
    <scope>NUCLEOTIDE SEQUENCE [LARGE SCALE GENOMIC DNA]</scope>
    <source>
        <strain>HTCC1062</strain>
    </source>
</reference>
<name>DXR_PELUB</name>
<protein>
    <recommendedName>
        <fullName evidence="1">1-deoxy-D-xylulose 5-phosphate reductoisomerase</fullName>
        <shortName evidence="1">DXP reductoisomerase</shortName>
        <ecNumber evidence="1">1.1.1.267</ecNumber>
    </recommendedName>
    <alternativeName>
        <fullName evidence="1">1-deoxyxylulose-5-phosphate reductoisomerase</fullName>
    </alternativeName>
    <alternativeName>
        <fullName evidence="1">2-C-methyl-D-erythritol 4-phosphate synthase</fullName>
    </alternativeName>
</protein>